<organism>
    <name type="scientific">Pseudomonas putida (strain W619)</name>
    <dbReference type="NCBI Taxonomy" id="390235"/>
    <lineage>
        <taxon>Bacteria</taxon>
        <taxon>Pseudomonadati</taxon>
        <taxon>Pseudomonadota</taxon>
        <taxon>Gammaproteobacteria</taxon>
        <taxon>Pseudomonadales</taxon>
        <taxon>Pseudomonadaceae</taxon>
        <taxon>Pseudomonas</taxon>
    </lineage>
</organism>
<name>LPTD_PSEPW</name>
<sequence length="934" mass="105679">MALKSPAFRRKFPLLVTGGLLALQPFATSYVVAAEQFDCQVSASGGWDCKPKSPVNNLPPRPVHDGAALTSGTEAPSAEAESADKPVLVTESKGRGLKSRSEDYSHLDWVPREKLTAAQLAETGPYCGGAYIEPTRPGMADTTPKDESPTYINAKVSKYQQEQQIATLAGDVVMRQGSMQAEADEANLYQAENRGELKGNVRIRDNGSLVVGDEAQIQLDTGEAQVDNAEYVMHKSHIRGNALYAKRSENAIIRLKDGTYTTCEPGSNAWQLKGNNITLNPATGFGTATNVTLRVKDFPVFYTPYIYFPIDDRRQSGFLPPSFSSTSDTGFMLVTPYYFNLAPNYDATLYPRYMTKRGLLMEGEFRYLTKSSEGQLGGAYLNDKNDDRKEQTDYEDQRWMINWQHKGGLDERLMTEVDYTDISDPFYFQDLESDQIGVESNDVVNQQGALTWRGDTYTARLNAQAYEMATLSQITPYNKLPQITVDGMLPYHPGGFDFSYQTEAVRFDRDLKDDFVTDEDGNPDFTAGAAGRRLDENVSGIARANGNRLNFAPAISLPMQASYGYVTPKLKYVYTNYDLDLDGQGKQEALAQASQPGYGSYSSSISRDVPVFSVDSGLYFDRNTSMFGTNYRQTLEPRMFYLYVPYKDQTDIPLFDTSETLFNFDSLFRDNRFSGTDRIGDENKLSLGVTTRWIQDDGFERQNFSIGQALYFKDRKAQLPGINYRDRSDAQSDVSPYALVYNYYFNRDWRFNSDFNWDPDSRSTRSGSAMFHYQPEDNPNKVVNLGYRYRNDTIAYDSTTGTWKVGGGDYGNPGDPNYIKDYYKIQQHDFSVIWPIVPQWNVIARWQHDYNRNRTLEAMGGFEYDNCCWKLRLINRYWIDYDDFSQAAPQNEKGDHGIFLQIVLKGLGGVVGNKVESFLDQGIEGYREREDQAY</sequence>
<evidence type="ECO:0000255" key="1">
    <source>
        <dbReference type="HAMAP-Rule" id="MF_01411"/>
    </source>
</evidence>
<evidence type="ECO:0000256" key="2">
    <source>
        <dbReference type="SAM" id="MobiDB-lite"/>
    </source>
</evidence>
<protein>
    <recommendedName>
        <fullName evidence="1">LPS-assembly protein LptD</fullName>
    </recommendedName>
</protein>
<accession>B1JE51</accession>
<dbReference type="EMBL" id="CP000949">
    <property type="protein sequence ID" value="ACA75274.1"/>
    <property type="molecule type" value="Genomic_DNA"/>
</dbReference>
<dbReference type="SMR" id="B1JE51"/>
<dbReference type="STRING" id="390235.PputW619_4798"/>
<dbReference type="KEGG" id="ppw:PputW619_4798"/>
<dbReference type="eggNOG" id="COG1452">
    <property type="taxonomic scope" value="Bacteria"/>
</dbReference>
<dbReference type="HOGENOM" id="CLU_009039_1_0_6"/>
<dbReference type="OrthoDB" id="9760225at2"/>
<dbReference type="GO" id="GO:0009279">
    <property type="term" value="C:cell outer membrane"/>
    <property type="evidence" value="ECO:0007669"/>
    <property type="project" value="UniProtKB-SubCell"/>
</dbReference>
<dbReference type="GO" id="GO:1990351">
    <property type="term" value="C:transporter complex"/>
    <property type="evidence" value="ECO:0007669"/>
    <property type="project" value="TreeGrafter"/>
</dbReference>
<dbReference type="GO" id="GO:0043165">
    <property type="term" value="P:Gram-negative-bacterium-type cell outer membrane assembly"/>
    <property type="evidence" value="ECO:0007669"/>
    <property type="project" value="UniProtKB-UniRule"/>
</dbReference>
<dbReference type="GO" id="GO:0015920">
    <property type="term" value="P:lipopolysaccharide transport"/>
    <property type="evidence" value="ECO:0007669"/>
    <property type="project" value="InterPro"/>
</dbReference>
<dbReference type="Gene3D" id="2.60.450.10">
    <property type="entry name" value="Lipopolysaccharide (LPS) transport protein A like domain"/>
    <property type="match status" value="1"/>
</dbReference>
<dbReference type="HAMAP" id="MF_01411">
    <property type="entry name" value="LPS_assembly_LptD"/>
    <property type="match status" value="1"/>
</dbReference>
<dbReference type="InterPro" id="IPR020889">
    <property type="entry name" value="LipoPS_assembly_LptD"/>
</dbReference>
<dbReference type="InterPro" id="IPR050218">
    <property type="entry name" value="LptD"/>
</dbReference>
<dbReference type="InterPro" id="IPR007543">
    <property type="entry name" value="LptD_C"/>
</dbReference>
<dbReference type="InterPro" id="IPR005653">
    <property type="entry name" value="OstA-like_N"/>
</dbReference>
<dbReference type="PANTHER" id="PTHR30189">
    <property type="entry name" value="LPS-ASSEMBLY PROTEIN"/>
    <property type="match status" value="1"/>
</dbReference>
<dbReference type="PANTHER" id="PTHR30189:SF1">
    <property type="entry name" value="LPS-ASSEMBLY PROTEIN LPTD"/>
    <property type="match status" value="1"/>
</dbReference>
<dbReference type="Pfam" id="PF04453">
    <property type="entry name" value="LptD"/>
    <property type="match status" value="1"/>
</dbReference>
<dbReference type="Pfam" id="PF03968">
    <property type="entry name" value="LptD_N"/>
    <property type="match status" value="1"/>
</dbReference>
<keyword id="KW-0998">Cell outer membrane</keyword>
<keyword id="KW-0472">Membrane</keyword>
<keyword id="KW-0732">Signal</keyword>
<feature type="signal peptide" evidence="1">
    <location>
        <begin position="1"/>
        <end position="33"/>
    </location>
</feature>
<feature type="chain" id="PRO_5000315407" description="LPS-assembly protein LptD">
    <location>
        <begin position="34"/>
        <end position="934"/>
    </location>
</feature>
<feature type="region of interest" description="Disordered" evidence="2">
    <location>
        <begin position="52"/>
        <end position="86"/>
    </location>
</feature>
<gene>
    <name evidence="1" type="primary">lptD</name>
    <name type="synonym">imp</name>
    <name type="synonym">ostA</name>
    <name type="ordered locus">PputW619_4798</name>
</gene>
<proteinExistence type="inferred from homology"/>
<reference key="1">
    <citation type="submission" date="2008-02" db="EMBL/GenBank/DDBJ databases">
        <title>Complete sequence of Pseudomonas putida W619.</title>
        <authorList>
            <person name="Copeland A."/>
            <person name="Lucas S."/>
            <person name="Lapidus A."/>
            <person name="Barry K."/>
            <person name="Detter J.C."/>
            <person name="Glavina del Rio T."/>
            <person name="Dalin E."/>
            <person name="Tice H."/>
            <person name="Pitluck S."/>
            <person name="Chain P."/>
            <person name="Malfatti S."/>
            <person name="Shin M."/>
            <person name="Vergez L."/>
            <person name="Schmutz J."/>
            <person name="Larimer F."/>
            <person name="Land M."/>
            <person name="Hauser L."/>
            <person name="Kyrpides N."/>
            <person name="Kim E."/>
            <person name="Taghavi S."/>
            <person name="Vangronsveld D."/>
            <person name="van der Lelie D."/>
            <person name="Richardson P."/>
        </authorList>
    </citation>
    <scope>NUCLEOTIDE SEQUENCE [LARGE SCALE GENOMIC DNA]</scope>
    <source>
        <strain>W619</strain>
    </source>
</reference>
<comment type="function">
    <text evidence="1">Together with LptE, is involved in the assembly of lipopolysaccharide (LPS) at the surface of the outer membrane.</text>
</comment>
<comment type="subunit">
    <text evidence="1">Component of the lipopolysaccharide transport and assembly complex. Interacts with LptE and LptA.</text>
</comment>
<comment type="subcellular location">
    <subcellularLocation>
        <location evidence="1">Cell outer membrane</location>
    </subcellularLocation>
</comment>
<comment type="similarity">
    <text evidence="1">Belongs to the LptD family.</text>
</comment>